<gene>
    <name evidence="1" type="primary">cmoA</name>
    <name type="ordered locus">SDY_1169</name>
</gene>
<organism>
    <name type="scientific">Shigella dysenteriae serotype 1 (strain Sd197)</name>
    <dbReference type="NCBI Taxonomy" id="300267"/>
    <lineage>
        <taxon>Bacteria</taxon>
        <taxon>Pseudomonadati</taxon>
        <taxon>Pseudomonadota</taxon>
        <taxon>Gammaproteobacteria</taxon>
        <taxon>Enterobacterales</taxon>
        <taxon>Enterobacteriaceae</taxon>
        <taxon>Shigella</taxon>
    </lineage>
</organism>
<reference key="1">
    <citation type="journal article" date="2005" name="Nucleic Acids Res.">
        <title>Genome dynamics and diversity of Shigella species, the etiologic agents of bacillary dysentery.</title>
        <authorList>
            <person name="Yang F."/>
            <person name="Yang J."/>
            <person name="Zhang X."/>
            <person name="Chen L."/>
            <person name="Jiang Y."/>
            <person name="Yan Y."/>
            <person name="Tang X."/>
            <person name="Wang J."/>
            <person name="Xiong Z."/>
            <person name="Dong J."/>
            <person name="Xue Y."/>
            <person name="Zhu Y."/>
            <person name="Xu X."/>
            <person name="Sun L."/>
            <person name="Chen S."/>
            <person name="Nie H."/>
            <person name="Peng J."/>
            <person name="Xu J."/>
            <person name="Wang Y."/>
            <person name="Yuan Z."/>
            <person name="Wen Y."/>
            <person name="Yao Z."/>
            <person name="Shen Y."/>
            <person name="Qiang B."/>
            <person name="Hou Y."/>
            <person name="Yu J."/>
            <person name="Jin Q."/>
        </authorList>
    </citation>
    <scope>NUCLEOTIDE SEQUENCE [LARGE SCALE GENOMIC DNA]</scope>
    <source>
        <strain>Sd197</strain>
    </source>
</reference>
<name>CMOA_SHIDS</name>
<sequence length="247" mass="27791">MSHRDTLFSAPIARLGDWTFDERVAEVFPDMIQRSVPGYSNIISMIGMLAERFVQPGTQVYDLGCSLGAATLSVRRNIHHDNCKIIAIDNSPAMIERCRRHIDAYKAPTPVDVIEGDIRDIAIENASMVVLNFTLQFLEPSERQALLDKIYQGLNPGGALVLSEKFSFEDAKVGELLFNMHHDFKRANGYSELEISQKRSMLENVMLTDSVETHKARLHKAGFEHSELWFQCFNFGSLVALKAEDAA</sequence>
<feature type="chain" id="PRO_0000314388" description="Carboxy-S-adenosyl-L-methionine synthase">
    <location>
        <begin position="1"/>
        <end position="247"/>
    </location>
</feature>
<feature type="binding site" evidence="1">
    <location>
        <position position="39"/>
    </location>
    <ligand>
        <name>S-adenosyl-L-methionine</name>
        <dbReference type="ChEBI" id="CHEBI:59789"/>
    </ligand>
</feature>
<feature type="binding site" evidence="1">
    <location>
        <begin position="64"/>
        <end position="66"/>
    </location>
    <ligand>
        <name>S-adenosyl-L-methionine</name>
        <dbReference type="ChEBI" id="CHEBI:59789"/>
    </ligand>
</feature>
<feature type="binding site" evidence="1">
    <location>
        <begin position="89"/>
        <end position="90"/>
    </location>
    <ligand>
        <name>S-adenosyl-L-methionine</name>
        <dbReference type="ChEBI" id="CHEBI:59789"/>
    </ligand>
</feature>
<feature type="binding site" evidence="1">
    <location>
        <begin position="117"/>
        <end position="118"/>
    </location>
    <ligand>
        <name>S-adenosyl-L-methionine</name>
        <dbReference type="ChEBI" id="CHEBI:59789"/>
    </ligand>
</feature>
<feature type="binding site" evidence="1">
    <location>
        <position position="132"/>
    </location>
    <ligand>
        <name>S-adenosyl-L-methionine</name>
        <dbReference type="ChEBI" id="CHEBI:59789"/>
    </ligand>
</feature>
<feature type="binding site" evidence="1">
    <location>
        <position position="199"/>
    </location>
    <ligand>
        <name>S-adenosyl-L-methionine</name>
        <dbReference type="ChEBI" id="CHEBI:59789"/>
    </ligand>
</feature>
<accession>Q32H79</accession>
<keyword id="KW-1185">Reference proteome</keyword>
<keyword id="KW-0949">S-adenosyl-L-methionine</keyword>
<keyword id="KW-0808">Transferase</keyword>
<comment type="function">
    <text evidence="1">Catalyzes the conversion of S-adenosyl-L-methionine (SAM) to carboxy-S-adenosyl-L-methionine (Cx-SAM).</text>
</comment>
<comment type="catalytic activity">
    <reaction evidence="1">
        <text>prephenate + S-adenosyl-L-methionine = carboxy-S-adenosyl-L-methionine + 3-phenylpyruvate + H2O</text>
        <dbReference type="Rhea" id="RHEA:51692"/>
        <dbReference type="ChEBI" id="CHEBI:15377"/>
        <dbReference type="ChEBI" id="CHEBI:18005"/>
        <dbReference type="ChEBI" id="CHEBI:29934"/>
        <dbReference type="ChEBI" id="CHEBI:59789"/>
        <dbReference type="ChEBI" id="CHEBI:134278"/>
    </reaction>
</comment>
<comment type="subunit">
    <text evidence="1">Homodimer.</text>
</comment>
<comment type="similarity">
    <text evidence="1">Belongs to the class I-like SAM-binding methyltransferase superfamily. Cx-SAM synthase family.</text>
</comment>
<protein>
    <recommendedName>
        <fullName evidence="1">Carboxy-S-adenosyl-L-methionine synthase</fullName>
        <shortName evidence="1">Cx-SAM synthase</shortName>
        <ecNumber evidence="1">2.1.3.-</ecNumber>
    </recommendedName>
</protein>
<dbReference type="EC" id="2.1.3.-" evidence="1"/>
<dbReference type="EMBL" id="CP000034">
    <property type="protein sequence ID" value="ABB61326.1"/>
    <property type="molecule type" value="Genomic_DNA"/>
</dbReference>
<dbReference type="RefSeq" id="WP_000019588.1">
    <property type="nucleotide sequence ID" value="NC_007606.1"/>
</dbReference>
<dbReference type="RefSeq" id="YP_402817.1">
    <property type="nucleotide sequence ID" value="NC_007606.1"/>
</dbReference>
<dbReference type="SMR" id="Q32H79"/>
<dbReference type="STRING" id="300267.SDY_1169"/>
<dbReference type="EnsemblBacteria" id="ABB61326">
    <property type="protein sequence ID" value="ABB61326"/>
    <property type="gene ID" value="SDY_1169"/>
</dbReference>
<dbReference type="GeneID" id="75202724"/>
<dbReference type="KEGG" id="sdy:SDY_1169"/>
<dbReference type="PATRIC" id="fig|300267.13.peg.1377"/>
<dbReference type="HOGENOM" id="CLU_078475_0_0_6"/>
<dbReference type="Proteomes" id="UP000002716">
    <property type="component" value="Chromosome"/>
</dbReference>
<dbReference type="GO" id="GO:0016743">
    <property type="term" value="F:carboxyl- or carbamoyltransferase activity"/>
    <property type="evidence" value="ECO:0007669"/>
    <property type="project" value="UniProtKB-UniRule"/>
</dbReference>
<dbReference type="GO" id="GO:1904047">
    <property type="term" value="F:S-adenosyl-L-methionine binding"/>
    <property type="evidence" value="ECO:0007669"/>
    <property type="project" value="UniProtKB-UniRule"/>
</dbReference>
<dbReference type="GO" id="GO:0002098">
    <property type="term" value="P:tRNA wobble uridine modification"/>
    <property type="evidence" value="ECO:0007669"/>
    <property type="project" value="InterPro"/>
</dbReference>
<dbReference type="CDD" id="cd02440">
    <property type="entry name" value="AdoMet_MTases"/>
    <property type="match status" value="1"/>
</dbReference>
<dbReference type="FunFam" id="3.40.50.150:FF:000030">
    <property type="entry name" value="Carboxy-S-adenosyl-L-methionine synthase"/>
    <property type="match status" value="1"/>
</dbReference>
<dbReference type="Gene3D" id="3.40.50.150">
    <property type="entry name" value="Vaccinia Virus protein VP39"/>
    <property type="match status" value="1"/>
</dbReference>
<dbReference type="HAMAP" id="MF_01589">
    <property type="entry name" value="Cx_SAM_synthase"/>
    <property type="match status" value="1"/>
</dbReference>
<dbReference type="InterPro" id="IPR005271">
    <property type="entry name" value="CmoA"/>
</dbReference>
<dbReference type="InterPro" id="IPR041698">
    <property type="entry name" value="Methyltransf_25"/>
</dbReference>
<dbReference type="InterPro" id="IPR029063">
    <property type="entry name" value="SAM-dependent_MTases_sf"/>
</dbReference>
<dbReference type="NCBIfam" id="TIGR00740">
    <property type="entry name" value="carboxy-S-adenosyl-L-methionine synthase CmoA"/>
    <property type="match status" value="1"/>
</dbReference>
<dbReference type="NCBIfam" id="NF011995">
    <property type="entry name" value="PRK15451.1"/>
    <property type="match status" value="1"/>
</dbReference>
<dbReference type="PANTHER" id="PTHR43861:SF2">
    <property type="entry name" value="CARBOXY-S-ADENOSYL-L-METHIONINE SYNTHASE"/>
    <property type="match status" value="1"/>
</dbReference>
<dbReference type="PANTHER" id="PTHR43861">
    <property type="entry name" value="TRANS-ACONITATE 2-METHYLTRANSFERASE-RELATED"/>
    <property type="match status" value="1"/>
</dbReference>
<dbReference type="Pfam" id="PF13649">
    <property type="entry name" value="Methyltransf_25"/>
    <property type="match status" value="1"/>
</dbReference>
<dbReference type="PIRSF" id="PIRSF006325">
    <property type="entry name" value="MeTrfase_bac"/>
    <property type="match status" value="1"/>
</dbReference>
<dbReference type="SUPFAM" id="SSF53335">
    <property type="entry name" value="S-adenosyl-L-methionine-dependent methyltransferases"/>
    <property type="match status" value="1"/>
</dbReference>
<evidence type="ECO:0000255" key="1">
    <source>
        <dbReference type="HAMAP-Rule" id="MF_01589"/>
    </source>
</evidence>
<proteinExistence type="inferred from homology"/>